<organism>
    <name type="scientific">Woolly monkey sarcoma virus</name>
    <name type="common">WMSV</name>
    <name type="synonym">Simian sarcoma-associated virus</name>
    <dbReference type="NCBI Taxonomy" id="11970"/>
    <lineage>
        <taxon>Viruses</taxon>
        <taxon>Riboviria</taxon>
        <taxon>Pararnavirae</taxon>
        <taxon>Artverviricota</taxon>
        <taxon>Revtraviricetes</taxon>
        <taxon>Ortervirales</taxon>
        <taxon>Retroviridae</taxon>
        <taxon>Orthoretrovirinae</taxon>
        <taxon>Gammaretrovirus</taxon>
    </lineage>
</organism>
<sequence>MGQNNSTPLSLTLDHWKDVRTRAHNLSVKIRKGKWQTFCSSEWPTFGVGWPPEGTFNLSVIFAVKRIVFQETGGHPDQVPYIVVWQDLAQSPPPWVPPSAKIAVVSSPENTRGPSAGRPSAPPRPPIYPATDDLLLLSEPPPYPAALPPPLAPPAVGPAPGQAPDSSDPEGPAAGTRSRRARSPADDSGPDSTVILPLRAIGPPAEPNGLVPLQYWPFSSADLYNWKSNHPSFSENPAGLTGLLESLMFSHQPTWDDCQQLLQILFTTEERERILLEARKNVLGDNGAPTQLENLINEAFPLNRPQWDYNTAAGRERLLVYRRTLVAGLKGAARRPTNLAKVREVLQGPAEPPSVFLERLMEAYRRYTPFDPSEEGQQAAVAMAFIGQSAPDIKKKLQRLEGLQDYSLQDLVREAEKVYHKRETEEERQEREKKEAEERERRRDRRQEKNLTRILAAVVSERGSRDRQTGNLSNRARKTPRDGRPPLDKDQCAYCKEKGHWARECPQKKNVREAKVLALDD</sequence>
<gene>
    <name type="primary">gag</name>
</gene>
<keyword id="KW-0167">Capsid protein</keyword>
<keyword id="KW-0175">Coiled coil</keyword>
<keyword id="KW-1032">Host cell membrane</keyword>
<keyword id="KW-1035">Host cytoplasm</keyword>
<keyword id="KW-1039">Host endosome</keyword>
<keyword id="KW-1043">Host membrane</keyword>
<keyword id="KW-0945">Host-virus interaction</keyword>
<keyword id="KW-0449">Lipoprotein</keyword>
<keyword id="KW-0472">Membrane</keyword>
<keyword id="KW-0479">Metal-binding</keyword>
<keyword id="KW-0519">Myristate</keyword>
<keyword id="KW-0597">Phosphoprotein</keyword>
<keyword id="KW-0694">RNA-binding</keyword>
<keyword id="KW-1198">Viral budding</keyword>
<keyword id="KW-1187">Viral budding via the host ESCRT complexes</keyword>
<keyword id="KW-0468">Viral matrix protein</keyword>
<keyword id="KW-0543">Viral nucleoprotein</keyword>
<keyword id="KW-1188">Viral release from host cell</keyword>
<keyword id="KW-0946">Virion</keyword>
<keyword id="KW-0862">Zinc</keyword>
<keyword id="KW-0863">Zinc-finger</keyword>
<evidence type="ECO:0000250" key="1">
    <source>
        <dbReference type="UniProtKB" id="P03332"/>
    </source>
</evidence>
<evidence type="ECO:0000250" key="2">
    <source>
        <dbReference type="UniProtKB" id="P03336"/>
    </source>
</evidence>
<evidence type="ECO:0000250" key="3">
    <source>
        <dbReference type="UniProtKB" id="P26807"/>
    </source>
</evidence>
<evidence type="ECO:0000255" key="4"/>
<evidence type="ECO:0000255" key="5">
    <source>
        <dbReference type="PROSITE-ProRule" id="PRU00047"/>
    </source>
</evidence>
<evidence type="ECO:0000256" key="6">
    <source>
        <dbReference type="SAM" id="MobiDB-lite"/>
    </source>
</evidence>
<evidence type="ECO:0000305" key="7"/>
<evidence type="ECO:0000312" key="8">
    <source>
        <dbReference type="EMBL" id="ALV83311.1"/>
    </source>
</evidence>
<protein>
    <recommendedName>
        <fullName>Gag polyprotein</fullName>
    </recommendedName>
    <alternativeName>
        <fullName>Core polyprotein</fullName>
    </alternativeName>
    <component>
        <recommendedName>
            <fullName>Matrix protein p15</fullName>
            <shortName>MA</shortName>
        </recommendedName>
    </component>
    <component>
        <recommendedName>
            <fullName>RNA-binding phosphoprotein p12</fullName>
        </recommendedName>
        <alternativeName>
            <fullName>pp12</fullName>
        </alternativeName>
    </component>
    <component>
        <recommendedName>
            <fullName>Capsid protein p30</fullName>
            <shortName>CA</shortName>
        </recommendedName>
    </component>
    <component>
        <recommendedName>
            <fullName>Nucleocapsid protein p10-Gag</fullName>
            <shortName>NC-gag</shortName>
        </recommendedName>
    </component>
</protein>
<comment type="function">
    <molecule>Gag polyprotein</molecule>
    <text evidence="1">Plays a role in budding and is processed by the viral protease during virion maturation outside the cell. During budding, it recruits, in a PPXY-dependent or independent manner, Nedd4-like ubiquitin ligases that conjugate ubiquitin molecules to Gag, or to Gag binding host factors. Interaction with HECT ubiquitin ligases probably links the viral protein to the host ESCRT pathway and facilitates release.</text>
</comment>
<comment type="function">
    <molecule>Matrix protein p15</molecule>
    <text evidence="1">Targets Gag and gag-pol polyproteins to the plasma membrane via a multipartite membrane binding signal, that includes its myristoylated N-terminus. Also mediates nuclear localization of the pre-integration complex.</text>
</comment>
<comment type="function">
    <molecule>RNA-binding phosphoprotein p12</molecule>
    <text evidence="1">Constituent of the pre-integration complex (PIC) which tethers the latter to mitotic chromosomes.</text>
</comment>
<comment type="function">
    <molecule>Capsid protein p30</molecule>
    <text evidence="2">Forms the spherical core of the virion that encapsulates the genomic RNA-nucleocapsid complex.</text>
</comment>
<comment type="function">
    <molecule>Nucleocapsid protein p10-Gag</molecule>
    <text evidence="1">Involved in the packaging and encapsidation of two copies of the genome. Binds with high affinity to conserved elements within the packaging signal, located near the 5'-end of the genome. This binding is dependent on genome dimerization.</text>
</comment>
<comment type="subunit">
    <molecule>Capsid protein p30</molecule>
    <text evidence="1 2">Homohexamer; further associates as homomultimer. The virus core is composed of a lattice formed from hexagonal rings, each containing six capsid monomers.</text>
</comment>
<comment type="subunit">
    <molecule>Gag polyprotein</molecule>
    <text evidence="1">Interacts (via PPXY motif) with host NEDD4. Interacts (via PSAP motif) with host TSG101.</text>
</comment>
<comment type="subcellular location">
    <molecule>Gag polyprotein</molecule>
    <subcellularLocation>
        <location evidence="1">Virion</location>
    </subcellularLocation>
    <subcellularLocation>
        <location evidence="1">Host cell membrane</location>
        <topology evidence="1">Lipid-anchor</topology>
    </subcellularLocation>
    <subcellularLocation>
        <location evidence="1">Host late endosome membrane</location>
        <topology evidence="1">Lipid-anchor</topology>
    </subcellularLocation>
    <subcellularLocation>
        <location evidence="3">Host endosome</location>
        <location evidence="3">Host multivesicular body</location>
    </subcellularLocation>
    <text evidence="7">These locations are probably linked to virus assembly sites.</text>
</comment>
<comment type="subcellular location">
    <molecule>Matrix protein p15</molecule>
    <subcellularLocation>
        <location evidence="1">Virion</location>
    </subcellularLocation>
</comment>
<comment type="subcellular location">
    <molecule>Capsid protein p30</molecule>
    <subcellularLocation>
        <location evidence="1">Virion</location>
    </subcellularLocation>
</comment>
<comment type="subcellular location">
    <molecule>Nucleocapsid protein p10-Gag</molecule>
    <subcellularLocation>
        <location evidence="1">Virion</location>
    </subcellularLocation>
</comment>
<comment type="subcellular location">
    <molecule>RNA-binding phosphoprotein p12</molecule>
    <subcellularLocation>
        <location evidence="1">Host cytoplasm</location>
    </subcellularLocation>
    <text evidence="1">Localizes to the host cytoplasm early in infection and binds to the mitotic chromosomes later on.</text>
</comment>
<comment type="domain">
    <molecule>Gag polyprotein</molecule>
    <text evidence="1">Late-budding domains (L domains) are short sequence motifs essential for viral particle budding. They recruit proteins of the host ESCRT machinery (Endosomal Sorting Complex Required for Transport) or ESCRT-associated proteins. RNA-binding phosphoprotein p12 contains one L domain: a PPXY motif which potentially interacts with the WW domain 3 of NEDD4 E3 ubiquitin ligase. Matrix protein p15 contains one L domain: a PTAP/PSAP motif, which potentially interacts with the UEV domain of TSG101.</text>
</comment>
<comment type="PTM">
    <molecule>Gag polyprotein</molecule>
    <text evidence="1">Specific enzymatic cleavages by the viral protease yield mature proteins. The protease is released by autocatalytic cleavage. The polyprotein is cleaved during and after budding, this process is termed maturation.</text>
</comment>
<comment type="PTM">
    <text evidence="1">RNA-binding phosphoprotein p12 is phosphorylated on serine residues.</text>
</comment>
<comment type="sequence caution" evidence="7">
    <conflict type="miscellaneous discrepancy">
        <sequence resource="EMBL-CDS" id="CAA24514"/>
    </conflict>
</comment>
<organismHost>
    <name type="scientific">Lagothrix</name>
    <name type="common">woolly monkeys</name>
    <dbReference type="NCBI Taxonomy" id="9518"/>
</organismHost>
<reference key="1">
    <citation type="journal article" date="1983" name="Proc. Natl. Acad. Sci. U.S.A.">
        <title>Nucleotide sequence of the simian sarcoma virus genome: demonstration that its acquired cellular sequences encode the transforming gene product p28sis.</title>
        <authorList>
            <person name="Devare S.G."/>
            <person name="Reddy E.P."/>
            <person name="Law J.D."/>
            <person name="Robbins K.C."/>
            <person name="Aaronson S.A."/>
        </authorList>
    </citation>
    <scope>NUCLEOTIDE SEQUENCE [GENOMIC DNA]</scope>
</reference>
<reference key="2">
    <citation type="journal article" date="2015" name="J. Virol.">
        <title>Episodic diversifying selection shaped the genomes of gibbon ape leukemia virus and related gammaretroviruses.</title>
        <authorList>
            <person name="Alfano N."/>
            <person name="Kolokotronis S.O."/>
            <person name="Tsangaras K."/>
            <person name="Roca A.L."/>
            <person name="Xu W."/>
            <person name="Eiden M.V."/>
            <person name="Greenwood A.D."/>
        </authorList>
    </citation>
    <scope>NUCLEOTIDE SEQUENCE [LARGE SCALE GENOMIC DNA]</scope>
    <source>
        <strain evidence="8">SSAV</strain>
    </source>
</reference>
<name>GAG_WMSV</name>
<proteinExistence type="inferred from homology"/>
<accession>P03330</accession>
<accession>A0A0U3TJX4</accession>
<feature type="initiator methionine" description="Removed" evidence="4">
    <location>
        <position position="1"/>
    </location>
</feature>
<feature type="chain" id="PRO_0000390820" description="Gag polyprotein">
    <location>
        <begin position="2"/>
        <end position="521"/>
    </location>
</feature>
<feature type="chain" id="PRO_0000040960" description="Matrix protein p15">
    <location>
        <begin position="2"/>
        <end position="128"/>
    </location>
</feature>
<feature type="chain" id="PRO_0000040961" description="RNA-binding phosphoprotein p12">
    <location>
        <begin position="129"/>
        <end position="196"/>
    </location>
</feature>
<feature type="chain" id="PRO_0000040962" description="Capsid protein p30">
    <location>
        <begin position="197"/>
        <end position="455"/>
    </location>
</feature>
<feature type="chain" id="PRO_0000040963" description="Nucleocapsid protein p10-Gag">
    <location>
        <begin position="456"/>
        <end position="521"/>
    </location>
</feature>
<feature type="zinc finger region" description="CCHC-type" evidence="5">
    <location>
        <begin position="490"/>
        <end position="507"/>
    </location>
</feature>
<feature type="region of interest" description="Disordered" evidence="6">
    <location>
        <begin position="106"/>
        <end position="197"/>
    </location>
</feature>
<feature type="region of interest" description="Disordered" evidence="6">
    <location>
        <begin position="420"/>
        <end position="490"/>
    </location>
</feature>
<feature type="coiled-coil region" evidence="4">
    <location>
        <begin position="408"/>
        <end position="455"/>
    </location>
</feature>
<feature type="short sequence motif" description="PTAP/PSAP motif" evidence="1">
    <location>
        <begin position="119"/>
        <end position="122"/>
    </location>
</feature>
<feature type="short sequence motif" description="PPXY motif" evidence="7">
    <location>
        <begin position="140"/>
        <end position="143"/>
    </location>
</feature>
<feature type="compositionally biased region" description="Pro residues" evidence="6">
    <location>
        <begin position="139"/>
        <end position="157"/>
    </location>
</feature>
<feature type="compositionally biased region" description="Basic and acidic residues" evidence="6">
    <location>
        <begin position="420"/>
        <end position="451"/>
    </location>
</feature>
<feature type="compositionally biased region" description="Basic and acidic residues" evidence="6">
    <location>
        <begin position="479"/>
        <end position="490"/>
    </location>
</feature>
<feature type="site" description="Cleavage; by viral protease" evidence="1">
    <location>
        <begin position="128"/>
        <end position="129"/>
    </location>
</feature>
<feature type="site" description="Cleavage; by viral protease" evidence="1">
    <location>
        <begin position="196"/>
        <end position="197"/>
    </location>
</feature>
<feature type="site" description="Cleavage; by viral protease" evidence="1">
    <location>
        <begin position="455"/>
        <end position="456"/>
    </location>
</feature>
<feature type="lipid moiety-binding region" description="N-myristoyl glycine; by host" evidence="4">
    <location>
        <position position="2"/>
    </location>
</feature>
<feature type="sequence conflict" description="In Ref. 1; CAA24514." ref="1">
    <original>D</original>
    <variation>G</variation>
    <location>
        <position position="14"/>
    </location>
</feature>
<feature type="sequence conflict" description="In Ref. 1; CAA24514." ref="1">
    <original>G</original>
    <variation>E</variation>
    <location>
        <position position="33"/>
    </location>
</feature>
<feature type="sequence conflict" description="In Ref. 1; CAA24514." ref="1">
    <original>R</original>
    <variation>Q</variation>
    <location>
        <position position="112"/>
    </location>
</feature>
<feature type="sequence conflict" description="In Ref. 1; CAA24514." ref="1">
    <original>R</original>
    <variation>L</variation>
    <location>
        <position position="317"/>
    </location>
</feature>
<feature type="sequence conflict" description="In Ref. 1; CAA24514." ref="1">
    <original>M</original>
    <variation>T</variation>
    <location>
        <position position="383"/>
    </location>
</feature>
<feature type="sequence conflict" description="In Ref. 1; CAA24514." ref="1">
    <original>I</original>
    <variation>T</variation>
    <location>
        <position position="386"/>
    </location>
</feature>
<feature type="sequence conflict" description="In Ref. 1; CAA24514." ref="1">
    <original>R</original>
    <variation>G</variation>
    <location>
        <position position="462"/>
    </location>
</feature>
<feature type="sequence conflict" description="In Ref. 1; CAA24514." ref="1">
    <original>R</original>
    <variation>G</variation>
    <location>
        <position position="465"/>
    </location>
</feature>
<feature type="sequence conflict" description="In Ref. 1; CAA24514." ref="1">
    <original>Q</original>
    <variation>R</variation>
    <location>
        <position position="468"/>
    </location>
</feature>
<feature type="sequence conflict" description="In Ref. 1; CAA24514." ref="1">
    <original>S</original>
    <variation>G</variation>
    <location>
        <position position="473"/>
    </location>
</feature>
<dbReference type="EMBL" id="V01201">
    <property type="protein sequence ID" value="CAA24514.1"/>
    <property type="status" value="ALT_SEQ"/>
    <property type="molecule type" value="Genomic_DNA"/>
</dbReference>
<dbReference type="EMBL" id="KT724051">
    <property type="protein sequence ID" value="ALV83311.1"/>
    <property type="molecule type" value="Genomic_DNA"/>
</dbReference>
<dbReference type="PIR" id="A03928">
    <property type="entry name" value="FOMVGS"/>
</dbReference>
<dbReference type="RefSeq" id="YP_001165469.2">
    <property type="nucleotide sequence ID" value="NC_009424.4"/>
</dbReference>
<dbReference type="RefSeq" id="YP_003580184.1">
    <property type="nucleotide sequence ID" value="NC_009424.4"/>
</dbReference>
<dbReference type="SMR" id="P03330"/>
<dbReference type="KEGG" id="vg:5176148"/>
<dbReference type="Proteomes" id="UP000167400">
    <property type="component" value="Genome"/>
</dbReference>
<dbReference type="Proteomes" id="UP000203831">
    <property type="component" value="Genome"/>
</dbReference>
<dbReference type="GO" id="GO:0044185">
    <property type="term" value="C:host cell late endosome membrane"/>
    <property type="evidence" value="ECO:0007669"/>
    <property type="project" value="UniProtKB-SubCell"/>
</dbReference>
<dbReference type="GO" id="GO:0020002">
    <property type="term" value="C:host cell plasma membrane"/>
    <property type="evidence" value="ECO:0007669"/>
    <property type="project" value="UniProtKB-SubCell"/>
</dbReference>
<dbReference type="GO" id="GO:0072494">
    <property type="term" value="C:host multivesicular body"/>
    <property type="evidence" value="ECO:0007669"/>
    <property type="project" value="UniProtKB-SubCell"/>
</dbReference>
<dbReference type="GO" id="GO:0016020">
    <property type="term" value="C:membrane"/>
    <property type="evidence" value="ECO:0007669"/>
    <property type="project" value="UniProtKB-KW"/>
</dbReference>
<dbReference type="GO" id="GO:0019013">
    <property type="term" value="C:viral nucleocapsid"/>
    <property type="evidence" value="ECO:0007669"/>
    <property type="project" value="UniProtKB-KW"/>
</dbReference>
<dbReference type="GO" id="GO:0003723">
    <property type="term" value="F:RNA binding"/>
    <property type="evidence" value="ECO:0007669"/>
    <property type="project" value="UniProtKB-KW"/>
</dbReference>
<dbReference type="GO" id="GO:0039660">
    <property type="term" value="F:structural constituent of virion"/>
    <property type="evidence" value="ECO:0007669"/>
    <property type="project" value="UniProtKB-KW"/>
</dbReference>
<dbReference type="GO" id="GO:0008270">
    <property type="term" value="F:zinc ion binding"/>
    <property type="evidence" value="ECO:0007669"/>
    <property type="project" value="UniProtKB-KW"/>
</dbReference>
<dbReference type="GO" id="GO:0039702">
    <property type="term" value="P:viral budding via host ESCRT complex"/>
    <property type="evidence" value="ECO:0007669"/>
    <property type="project" value="UniProtKB-KW"/>
</dbReference>
<dbReference type="Gene3D" id="1.10.150.180">
    <property type="entry name" value="Gamma-retroviral matrix domain"/>
    <property type="match status" value="1"/>
</dbReference>
<dbReference type="Gene3D" id="1.10.375.10">
    <property type="entry name" value="Human Immunodeficiency Virus Type 1 Capsid Protein"/>
    <property type="match status" value="1"/>
</dbReference>
<dbReference type="Gene3D" id="4.10.60.10">
    <property type="entry name" value="Zinc finger, CCHC-type"/>
    <property type="match status" value="1"/>
</dbReference>
<dbReference type="InterPro" id="IPR000840">
    <property type="entry name" value="G_retro_matrix"/>
</dbReference>
<dbReference type="InterPro" id="IPR036946">
    <property type="entry name" value="G_retro_matrix_sf"/>
</dbReference>
<dbReference type="InterPro" id="IPR003036">
    <property type="entry name" value="Gag_P30"/>
</dbReference>
<dbReference type="InterPro" id="IPR008919">
    <property type="entry name" value="Retrov_capsid_N"/>
</dbReference>
<dbReference type="InterPro" id="IPR050462">
    <property type="entry name" value="Retroviral_Gag-Pol_poly"/>
</dbReference>
<dbReference type="InterPro" id="IPR010999">
    <property type="entry name" value="Retrovr_matrix"/>
</dbReference>
<dbReference type="InterPro" id="IPR001878">
    <property type="entry name" value="Znf_CCHC"/>
</dbReference>
<dbReference type="InterPro" id="IPR036875">
    <property type="entry name" value="Znf_CCHC_sf"/>
</dbReference>
<dbReference type="PANTHER" id="PTHR33166">
    <property type="entry name" value="GAG_P30 DOMAIN-CONTAINING PROTEIN"/>
    <property type="match status" value="1"/>
</dbReference>
<dbReference type="Pfam" id="PF01140">
    <property type="entry name" value="Gag_MA"/>
    <property type="match status" value="1"/>
</dbReference>
<dbReference type="Pfam" id="PF02093">
    <property type="entry name" value="Gag_p30"/>
    <property type="match status" value="1"/>
</dbReference>
<dbReference type="Pfam" id="PF00098">
    <property type="entry name" value="zf-CCHC"/>
    <property type="match status" value="1"/>
</dbReference>
<dbReference type="SMART" id="SM00343">
    <property type="entry name" value="ZnF_C2HC"/>
    <property type="match status" value="1"/>
</dbReference>
<dbReference type="SUPFAM" id="SSF47836">
    <property type="entry name" value="Retroviral matrix proteins"/>
    <property type="match status" value="1"/>
</dbReference>
<dbReference type="SUPFAM" id="SSF47943">
    <property type="entry name" value="Retrovirus capsid protein, N-terminal core domain"/>
    <property type="match status" value="1"/>
</dbReference>
<dbReference type="SUPFAM" id="SSF57756">
    <property type="entry name" value="Retrovirus zinc finger-like domains"/>
    <property type="match status" value="1"/>
</dbReference>
<dbReference type="PROSITE" id="PS50158">
    <property type="entry name" value="ZF_CCHC"/>
    <property type="match status" value="1"/>
</dbReference>